<gene>
    <name evidence="1" type="primary">cheD</name>
    <name type="ordered locus">Tcr_1613</name>
</gene>
<keyword id="KW-0145">Chemotaxis</keyword>
<keyword id="KW-0378">Hydrolase</keyword>
<comment type="function">
    <text evidence="1">Probably deamidates glutamine residues to glutamate on methyl-accepting chemotaxis receptors (MCPs), playing an important role in chemotaxis.</text>
</comment>
<comment type="catalytic activity">
    <reaction evidence="1">
        <text>L-glutaminyl-[protein] + H2O = L-glutamyl-[protein] + NH4(+)</text>
        <dbReference type="Rhea" id="RHEA:16441"/>
        <dbReference type="Rhea" id="RHEA-COMP:10207"/>
        <dbReference type="Rhea" id="RHEA-COMP:10208"/>
        <dbReference type="ChEBI" id="CHEBI:15377"/>
        <dbReference type="ChEBI" id="CHEBI:28938"/>
        <dbReference type="ChEBI" id="CHEBI:29973"/>
        <dbReference type="ChEBI" id="CHEBI:30011"/>
        <dbReference type="EC" id="3.5.1.44"/>
    </reaction>
</comment>
<comment type="similarity">
    <text evidence="1">Belongs to the CheD family.</text>
</comment>
<name>CHED_HYDCU</name>
<dbReference type="EC" id="3.5.1.44" evidence="1"/>
<dbReference type="EMBL" id="CP000109">
    <property type="protein sequence ID" value="ABB42205.1"/>
    <property type="molecule type" value="Genomic_DNA"/>
</dbReference>
<dbReference type="SMR" id="Q31F68"/>
<dbReference type="STRING" id="317025.Tcr_1613"/>
<dbReference type="KEGG" id="tcx:Tcr_1613"/>
<dbReference type="eggNOG" id="COG1871">
    <property type="taxonomic scope" value="Bacteria"/>
</dbReference>
<dbReference type="HOGENOM" id="CLU_087854_0_0_6"/>
<dbReference type="OrthoDB" id="9807202at2"/>
<dbReference type="GO" id="GO:0050568">
    <property type="term" value="F:protein-glutamine glutaminase activity"/>
    <property type="evidence" value="ECO:0007669"/>
    <property type="project" value="UniProtKB-UniRule"/>
</dbReference>
<dbReference type="GO" id="GO:0006935">
    <property type="term" value="P:chemotaxis"/>
    <property type="evidence" value="ECO:0007669"/>
    <property type="project" value="UniProtKB-UniRule"/>
</dbReference>
<dbReference type="CDD" id="cd16352">
    <property type="entry name" value="CheD"/>
    <property type="match status" value="1"/>
</dbReference>
<dbReference type="Gene3D" id="3.30.1330.200">
    <property type="match status" value="1"/>
</dbReference>
<dbReference type="HAMAP" id="MF_01440">
    <property type="entry name" value="CheD"/>
    <property type="match status" value="1"/>
</dbReference>
<dbReference type="InterPro" id="IPR038592">
    <property type="entry name" value="CheD-like_sf"/>
</dbReference>
<dbReference type="InterPro" id="IPR005659">
    <property type="entry name" value="Chemorcpt_Glu_NH3ase_CheD"/>
</dbReference>
<dbReference type="InterPro" id="IPR011324">
    <property type="entry name" value="Cytotoxic_necrot_fac-like_cat"/>
</dbReference>
<dbReference type="NCBIfam" id="NF010013">
    <property type="entry name" value="PRK13487.1"/>
    <property type="match status" value="1"/>
</dbReference>
<dbReference type="PANTHER" id="PTHR35147">
    <property type="entry name" value="CHEMORECEPTOR GLUTAMINE DEAMIDASE CHED-RELATED"/>
    <property type="match status" value="1"/>
</dbReference>
<dbReference type="PANTHER" id="PTHR35147:SF2">
    <property type="entry name" value="CHEMORECEPTOR GLUTAMINE DEAMIDASE CHED-RELATED"/>
    <property type="match status" value="1"/>
</dbReference>
<dbReference type="Pfam" id="PF03975">
    <property type="entry name" value="CheD"/>
    <property type="match status" value="1"/>
</dbReference>
<dbReference type="SUPFAM" id="SSF64438">
    <property type="entry name" value="CNF1/YfiH-like putative cysteine hydrolases"/>
    <property type="match status" value="1"/>
</dbReference>
<evidence type="ECO:0000255" key="1">
    <source>
        <dbReference type="HAMAP-Rule" id="MF_01440"/>
    </source>
</evidence>
<proteinExistence type="inferred from homology"/>
<sequence length="191" mass="21283">MQKSVDPAEGITTYKILPGEFYVTKDNERIETVLGSCISACVRDPVTGVGGMNHFMLPVDKNATGASELSDANRYGNYAMENLVNALLNAGARRERLEFKLFGGGRIMSSTTNIGWYNIGFAFDYIYTEGFKIVSQDIGDVYPRKILYYPNSGRVRVRRLNAMHNQSLAAEESRYINNIGSKPVEGDVELF</sequence>
<feature type="chain" id="PRO_0000251074" description="Probable chemoreceptor glutamine deamidase CheD">
    <location>
        <begin position="1"/>
        <end position="191"/>
    </location>
</feature>
<reference key="1">
    <citation type="journal article" date="2006" name="PLoS Biol.">
        <title>The genome of deep-sea vent chemolithoautotroph Thiomicrospira crunogena XCL-2.</title>
        <authorList>
            <person name="Scott K.M."/>
            <person name="Sievert S.M."/>
            <person name="Abril F.N."/>
            <person name="Ball L.A."/>
            <person name="Barrett C.J."/>
            <person name="Blake R.A."/>
            <person name="Boller A.J."/>
            <person name="Chain P.S.G."/>
            <person name="Clark J.A."/>
            <person name="Davis C.R."/>
            <person name="Detter C."/>
            <person name="Do K.F."/>
            <person name="Dobrinski K.P."/>
            <person name="Faza B.I."/>
            <person name="Fitzpatrick K.A."/>
            <person name="Freyermuth S.K."/>
            <person name="Harmer T.L."/>
            <person name="Hauser L.J."/>
            <person name="Huegler M."/>
            <person name="Kerfeld C.A."/>
            <person name="Klotz M.G."/>
            <person name="Kong W.W."/>
            <person name="Land M."/>
            <person name="Lapidus A."/>
            <person name="Larimer F.W."/>
            <person name="Longo D.L."/>
            <person name="Lucas S."/>
            <person name="Malfatti S.A."/>
            <person name="Massey S.E."/>
            <person name="Martin D.D."/>
            <person name="McCuddin Z."/>
            <person name="Meyer F."/>
            <person name="Moore J.L."/>
            <person name="Ocampo L.H. Jr."/>
            <person name="Paul J.H."/>
            <person name="Paulsen I.T."/>
            <person name="Reep D.K."/>
            <person name="Ren Q."/>
            <person name="Ross R.L."/>
            <person name="Sato P.Y."/>
            <person name="Thomas P."/>
            <person name="Tinkham L.E."/>
            <person name="Zeruth G.T."/>
        </authorList>
    </citation>
    <scope>NUCLEOTIDE SEQUENCE [LARGE SCALE GENOMIC DNA]</scope>
    <source>
        <strain>DSM 25203 / XCL-2</strain>
    </source>
</reference>
<accession>Q31F68</accession>
<protein>
    <recommendedName>
        <fullName evidence="1">Probable chemoreceptor glutamine deamidase CheD</fullName>
        <ecNumber evidence="1">3.5.1.44</ecNumber>
    </recommendedName>
</protein>
<organism>
    <name type="scientific">Hydrogenovibrio crunogenus (strain DSM 25203 / XCL-2)</name>
    <name type="common">Thiomicrospira crunogena</name>
    <dbReference type="NCBI Taxonomy" id="317025"/>
    <lineage>
        <taxon>Bacteria</taxon>
        <taxon>Pseudomonadati</taxon>
        <taxon>Pseudomonadota</taxon>
        <taxon>Gammaproteobacteria</taxon>
        <taxon>Thiotrichales</taxon>
        <taxon>Piscirickettsiaceae</taxon>
        <taxon>Hydrogenovibrio</taxon>
    </lineage>
</organism>